<organism>
    <name type="scientific">Mycosarcoma maydis</name>
    <name type="common">Corn smut fungus</name>
    <name type="synonym">Ustilago maydis</name>
    <dbReference type="NCBI Taxonomy" id="5270"/>
    <lineage>
        <taxon>Eukaryota</taxon>
        <taxon>Fungi</taxon>
        <taxon>Dikarya</taxon>
        <taxon>Basidiomycota</taxon>
        <taxon>Ustilaginomycotina</taxon>
        <taxon>Ustilaginomycetes</taxon>
        <taxon>Ustilaginales</taxon>
        <taxon>Ustilaginaceae</taxon>
        <taxon>Mycosarcoma</taxon>
    </lineage>
</organism>
<comment type="function">
    <text evidence="1">PPIases accelerate the folding of proteins. It catalyzes the cis-trans isomerization of proline imidic peptide bonds in oligopeptides (By similarity).</text>
</comment>
<comment type="catalytic activity">
    <reaction>
        <text>[protein]-peptidylproline (omega=180) = [protein]-peptidylproline (omega=0)</text>
        <dbReference type="Rhea" id="RHEA:16237"/>
        <dbReference type="Rhea" id="RHEA-COMP:10747"/>
        <dbReference type="Rhea" id="RHEA-COMP:10748"/>
        <dbReference type="ChEBI" id="CHEBI:83833"/>
        <dbReference type="ChEBI" id="CHEBI:83834"/>
        <dbReference type="EC" id="5.2.1.8"/>
    </reaction>
</comment>
<comment type="subcellular location">
    <subcellularLocation>
        <location evidence="1">Nucleus</location>
    </subcellularLocation>
</comment>
<comment type="similarity">
    <text evidence="5">Belongs to the cyclophilin-type PPIase family. PPIL4 subfamily.</text>
</comment>
<keyword id="KW-0413">Isomerase</keyword>
<keyword id="KW-0539">Nucleus</keyword>
<keyword id="KW-1185">Reference proteome</keyword>
<keyword id="KW-0694">RNA-binding</keyword>
<keyword id="KW-0697">Rotamase</keyword>
<reference key="1">
    <citation type="journal article" date="2006" name="Nature">
        <title>Insights from the genome of the biotrophic fungal plant pathogen Ustilago maydis.</title>
        <authorList>
            <person name="Kaemper J."/>
            <person name="Kahmann R."/>
            <person name="Boelker M."/>
            <person name="Ma L.-J."/>
            <person name="Brefort T."/>
            <person name="Saville B.J."/>
            <person name="Banuett F."/>
            <person name="Kronstad J.W."/>
            <person name="Gold S.E."/>
            <person name="Mueller O."/>
            <person name="Perlin M.H."/>
            <person name="Woesten H.A.B."/>
            <person name="de Vries R."/>
            <person name="Ruiz-Herrera J."/>
            <person name="Reynaga-Pena C.G."/>
            <person name="Snetselaar K."/>
            <person name="McCann M."/>
            <person name="Perez-Martin J."/>
            <person name="Feldbruegge M."/>
            <person name="Basse C.W."/>
            <person name="Steinberg G."/>
            <person name="Ibeas J.I."/>
            <person name="Holloman W."/>
            <person name="Guzman P."/>
            <person name="Farman M.L."/>
            <person name="Stajich J.E."/>
            <person name="Sentandreu R."/>
            <person name="Gonzalez-Prieto J.M."/>
            <person name="Kennell J.C."/>
            <person name="Molina L."/>
            <person name="Schirawski J."/>
            <person name="Mendoza-Mendoza A."/>
            <person name="Greilinger D."/>
            <person name="Muench K."/>
            <person name="Roessel N."/>
            <person name="Scherer M."/>
            <person name="Vranes M."/>
            <person name="Ladendorf O."/>
            <person name="Vincon V."/>
            <person name="Fuchs U."/>
            <person name="Sandrock B."/>
            <person name="Meng S."/>
            <person name="Ho E.C.H."/>
            <person name="Cahill M.J."/>
            <person name="Boyce K.J."/>
            <person name="Klose J."/>
            <person name="Klosterman S.J."/>
            <person name="Deelstra H.J."/>
            <person name="Ortiz-Castellanos L."/>
            <person name="Li W."/>
            <person name="Sanchez-Alonso P."/>
            <person name="Schreier P.H."/>
            <person name="Haeuser-Hahn I."/>
            <person name="Vaupel M."/>
            <person name="Koopmann E."/>
            <person name="Friedrich G."/>
            <person name="Voss H."/>
            <person name="Schlueter T."/>
            <person name="Margolis J."/>
            <person name="Platt D."/>
            <person name="Swimmer C."/>
            <person name="Gnirke A."/>
            <person name="Chen F."/>
            <person name="Vysotskaia V."/>
            <person name="Mannhaupt G."/>
            <person name="Gueldener U."/>
            <person name="Muensterkoetter M."/>
            <person name="Haase D."/>
            <person name="Oesterheld M."/>
            <person name="Mewes H.-W."/>
            <person name="Mauceli E.W."/>
            <person name="DeCaprio D."/>
            <person name="Wade C.M."/>
            <person name="Butler J."/>
            <person name="Young S.K."/>
            <person name="Jaffe D.B."/>
            <person name="Calvo S.E."/>
            <person name="Nusbaum C."/>
            <person name="Galagan J.E."/>
            <person name="Birren B.W."/>
        </authorList>
    </citation>
    <scope>NUCLEOTIDE SEQUENCE [LARGE SCALE GENOMIC DNA]</scope>
    <source>
        <strain>DSM 14603 / FGSC 9021 / UM521</strain>
    </source>
</reference>
<reference key="2">
    <citation type="submission" date="2014-09" db="EMBL/GenBank/DDBJ databases">
        <authorList>
            <person name="Gueldener U."/>
            <person name="Muensterkoetter M."/>
            <person name="Walter M.C."/>
            <person name="Mannhaupt G."/>
            <person name="Kahmann R."/>
        </authorList>
    </citation>
    <scope>GENOME REANNOTATION</scope>
    <source>
        <strain>DSM 14603 / FGSC 9021 / UM521</strain>
    </source>
</reference>
<reference key="3">
    <citation type="submission" date="2006-02" db="UniProtKB">
        <authorList>
            <person name="Pemberton T.J."/>
        </authorList>
    </citation>
    <scope>REVISION OF GENE MODEL</scope>
</reference>
<sequence>MSVLLETSLGDIVIDLHTELAPRSCTNFLKLCSKHYYKLNAFFRVEKDFLAQTGDPSNTGKGGASIWSQLPSTSQDSSTSTYFTPESSDGQLKHLKKGTVSFACFRKHVQGADEDGEGGSCELLAGSQFFVTLKDELDYLDGRHAPFGMVVEGHEPGGTLDKINHAFTDDQKRPLRDIRIRHVVVLEDPFADPDGFCAPSRSPSPTPCQVRALRLADDEDVHSDVDPASKEEMRRNADTNAAALTLEMVGDLPFAEIRPPENILFVCKLNPVTRSDDLELIFSRFGKILSCEVIKDKKTGDSLQYAFIEFDKKDDAERAYFKMQNVLVDDRRIWVDFSQSVSRLHGDWVKKRNAGSDAPRAHYQSGADEQSVDSYRPNAGGYQKRGDDRRHDRRDQPTARGDTSSWHSRQDSERSYRESNDDTRDRSNKRSRRHHDDVPQQSRSRSERHDSHRDHERHHLSRHVRPSDEGESKCRYEAHSHTRHDEHTRRHDSSSTAARRDEDRRSERSRHDRDRDRDRDRDRDREREHRRRTEDRRRHDDRQRSRDGSRR</sequence>
<evidence type="ECO:0000250" key="1"/>
<evidence type="ECO:0000255" key="2">
    <source>
        <dbReference type="PROSITE-ProRule" id="PRU00156"/>
    </source>
</evidence>
<evidence type="ECO:0000255" key="3">
    <source>
        <dbReference type="PROSITE-ProRule" id="PRU00176"/>
    </source>
</evidence>
<evidence type="ECO:0000256" key="4">
    <source>
        <dbReference type="SAM" id="MobiDB-lite"/>
    </source>
</evidence>
<evidence type="ECO:0000305" key="5"/>
<proteinExistence type="inferred from homology"/>
<feature type="chain" id="PRO_0000232981" description="Peptidyl-prolyl cis-trans isomerase-like 4">
    <location>
        <begin position="1"/>
        <end position="551"/>
    </location>
</feature>
<feature type="domain" description="PPIase cyclophilin-type" evidence="2">
    <location>
        <begin position="1"/>
        <end position="185"/>
    </location>
</feature>
<feature type="domain" description="RRM" evidence="3">
    <location>
        <begin position="262"/>
        <end position="340"/>
    </location>
</feature>
<feature type="region of interest" description="Disordered" evidence="4">
    <location>
        <begin position="54"/>
        <end position="88"/>
    </location>
</feature>
<feature type="region of interest" description="Disordered" evidence="4">
    <location>
        <begin position="352"/>
        <end position="551"/>
    </location>
</feature>
<feature type="compositionally biased region" description="Polar residues" evidence="4">
    <location>
        <begin position="66"/>
        <end position="88"/>
    </location>
</feature>
<feature type="compositionally biased region" description="Basic and acidic residues" evidence="4">
    <location>
        <begin position="384"/>
        <end position="397"/>
    </location>
</feature>
<feature type="compositionally biased region" description="Basic and acidic residues" evidence="4">
    <location>
        <begin position="408"/>
        <end position="454"/>
    </location>
</feature>
<feature type="compositionally biased region" description="Basic residues" evidence="4">
    <location>
        <begin position="455"/>
        <end position="464"/>
    </location>
</feature>
<feature type="compositionally biased region" description="Basic and acidic residues" evidence="4">
    <location>
        <begin position="465"/>
        <end position="551"/>
    </location>
</feature>
<name>PPIL4_MYCMD</name>
<gene>
    <name type="primary">CYP6</name>
    <name type="ORF">UMAG_11085</name>
</gene>
<protein>
    <recommendedName>
        <fullName>Peptidyl-prolyl cis-trans isomerase-like 4</fullName>
        <shortName>PPIase</shortName>
        <ecNumber>5.2.1.8</ecNumber>
    </recommendedName>
    <alternativeName>
        <fullName>Rotamase</fullName>
    </alternativeName>
</protein>
<dbReference type="EC" id="5.2.1.8"/>
<dbReference type="EMBL" id="CM003148">
    <property type="protein sequence ID" value="KIS68397.1"/>
    <property type="molecule type" value="Genomic_DNA"/>
</dbReference>
<dbReference type="RefSeq" id="XP_011390092.1">
    <property type="nucleotide sequence ID" value="XM_011391790.1"/>
</dbReference>
<dbReference type="SMR" id="P0C196"/>
<dbReference type="FunCoup" id="P0C196">
    <property type="interactions" value="807"/>
</dbReference>
<dbReference type="STRING" id="237631.P0C196"/>
<dbReference type="EnsemblFungi" id="KIS68397">
    <property type="protein sequence ID" value="KIS68397"/>
    <property type="gene ID" value="UMAG_11085"/>
</dbReference>
<dbReference type="GeneID" id="23567014"/>
<dbReference type="KEGG" id="uma:UMAG_11085"/>
<dbReference type="VEuPathDB" id="FungiDB:UMAG_11085"/>
<dbReference type="InParanoid" id="P0C196"/>
<dbReference type="OrthoDB" id="2083at2759"/>
<dbReference type="Proteomes" id="UP000000561">
    <property type="component" value="Chromosome 9"/>
</dbReference>
<dbReference type="GO" id="GO:0005634">
    <property type="term" value="C:nucleus"/>
    <property type="evidence" value="ECO:0000318"/>
    <property type="project" value="GO_Central"/>
</dbReference>
<dbReference type="GO" id="GO:0003755">
    <property type="term" value="F:peptidyl-prolyl cis-trans isomerase activity"/>
    <property type="evidence" value="ECO:0007669"/>
    <property type="project" value="UniProtKB-KW"/>
</dbReference>
<dbReference type="GO" id="GO:0003723">
    <property type="term" value="F:RNA binding"/>
    <property type="evidence" value="ECO:0007669"/>
    <property type="project" value="UniProtKB-KW"/>
</dbReference>
<dbReference type="CDD" id="cd12235">
    <property type="entry name" value="RRM_PPIL4"/>
    <property type="match status" value="1"/>
</dbReference>
<dbReference type="FunFam" id="3.30.70.330:FF:001244">
    <property type="entry name" value="Peptidyl-prolyl cis-trans isomerase"/>
    <property type="match status" value="1"/>
</dbReference>
<dbReference type="Gene3D" id="3.30.70.330">
    <property type="match status" value="1"/>
</dbReference>
<dbReference type="Gene3D" id="2.40.100.10">
    <property type="entry name" value="Cyclophilin-like"/>
    <property type="match status" value="1"/>
</dbReference>
<dbReference type="InterPro" id="IPR035542">
    <property type="entry name" value="CRIP"/>
</dbReference>
<dbReference type="InterPro" id="IPR029000">
    <property type="entry name" value="Cyclophilin-like_dom_sf"/>
</dbReference>
<dbReference type="InterPro" id="IPR002130">
    <property type="entry name" value="Cyclophilin-type_PPIase_dom"/>
</dbReference>
<dbReference type="InterPro" id="IPR012677">
    <property type="entry name" value="Nucleotide-bd_a/b_plait_sf"/>
</dbReference>
<dbReference type="InterPro" id="IPR035979">
    <property type="entry name" value="RBD_domain_sf"/>
</dbReference>
<dbReference type="InterPro" id="IPR000504">
    <property type="entry name" value="RRM_dom"/>
</dbReference>
<dbReference type="PANTHER" id="PTHR45843">
    <property type="entry name" value="PEPTIDYL-PROLYL CIS-TRANS ISOMERASE-LIKE 4"/>
    <property type="match status" value="1"/>
</dbReference>
<dbReference type="PANTHER" id="PTHR45843:SF1">
    <property type="entry name" value="PEPTIDYL-PROLYL CIS-TRANS ISOMERASE-LIKE 4"/>
    <property type="match status" value="1"/>
</dbReference>
<dbReference type="Pfam" id="PF00160">
    <property type="entry name" value="Pro_isomerase"/>
    <property type="match status" value="1"/>
</dbReference>
<dbReference type="Pfam" id="PF00076">
    <property type="entry name" value="RRM_1"/>
    <property type="match status" value="1"/>
</dbReference>
<dbReference type="PRINTS" id="PR00153">
    <property type="entry name" value="CSAPPISMRASE"/>
</dbReference>
<dbReference type="SMART" id="SM00360">
    <property type="entry name" value="RRM"/>
    <property type="match status" value="1"/>
</dbReference>
<dbReference type="SUPFAM" id="SSF50891">
    <property type="entry name" value="Cyclophilin-like"/>
    <property type="match status" value="1"/>
</dbReference>
<dbReference type="SUPFAM" id="SSF54928">
    <property type="entry name" value="RNA-binding domain, RBD"/>
    <property type="match status" value="1"/>
</dbReference>
<dbReference type="PROSITE" id="PS50072">
    <property type="entry name" value="CSA_PPIASE_2"/>
    <property type="match status" value="1"/>
</dbReference>
<dbReference type="PROSITE" id="PS50102">
    <property type="entry name" value="RRM"/>
    <property type="match status" value="1"/>
</dbReference>
<accession>P0C196</accession>
<accession>A0A0D1C3V8</accession>
<accession>Q4P8S3</accession>